<organism>
    <name type="scientific">Paenarthrobacter aurescens (strain TC1)</name>
    <dbReference type="NCBI Taxonomy" id="290340"/>
    <lineage>
        <taxon>Bacteria</taxon>
        <taxon>Bacillati</taxon>
        <taxon>Actinomycetota</taxon>
        <taxon>Actinomycetes</taxon>
        <taxon>Micrococcales</taxon>
        <taxon>Micrococcaceae</taxon>
        <taxon>Paenarthrobacter</taxon>
    </lineage>
</organism>
<keyword id="KW-0678">Repressor</keyword>
<keyword id="KW-0687">Ribonucleoprotein</keyword>
<keyword id="KW-0689">Ribosomal protein</keyword>
<keyword id="KW-0694">RNA-binding</keyword>
<keyword id="KW-0699">rRNA-binding</keyword>
<keyword id="KW-0810">Translation regulation</keyword>
<keyword id="KW-0820">tRNA-binding</keyword>
<gene>
    <name evidence="1" type="primary">rplA</name>
    <name type="ordered locus">AAur_2964</name>
</gene>
<protein>
    <recommendedName>
        <fullName evidence="1">Large ribosomal subunit protein uL1</fullName>
    </recommendedName>
    <alternativeName>
        <fullName evidence="2">50S ribosomal protein L1</fullName>
    </alternativeName>
</protein>
<feature type="chain" id="PRO_0000307958" description="Large ribosomal subunit protein uL1">
    <location>
        <begin position="1"/>
        <end position="235"/>
    </location>
</feature>
<name>RL1_PAEAT</name>
<proteinExistence type="inferred from homology"/>
<accession>A1R8W1</accession>
<reference key="1">
    <citation type="journal article" date="2006" name="PLoS Genet.">
        <title>Secrets of soil survival revealed by the genome sequence of Arthrobacter aurescens TC1.</title>
        <authorList>
            <person name="Mongodin E.F."/>
            <person name="Shapir N."/>
            <person name="Daugherty S.C."/>
            <person name="DeBoy R.T."/>
            <person name="Emerson J.B."/>
            <person name="Shvartzbeyn A."/>
            <person name="Radune D."/>
            <person name="Vamathevan J."/>
            <person name="Riggs F."/>
            <person name="Grinberg V."/>
            <person name="Khouri H.M."/>
            <person name="Wackett L.P."/>
            <person name="Nelson K.E."/>
            <person name="Sadowsky M.J."/>
        </authorList>
    </citation>
    <scope>NUCLEOTIDE SEQUENCE [LARGE SCALE GENOMIC DNA]</scope>
    <source>
        <strain>TC1</strain>
    </source>
</reference>
<dbReference type="EMBL" id="CP000474">
    <property type="protein sequence ID" value="ABM06753.1"/>
    <property type="molecule type" value="Genomic_DNA"/>
</dbReference>
<dbReference type="RefSeq" id="WP_011775608.1">
    <property type="nucleotide sequence ID" value="NC_008711.1"/>
</dbReference>
<dbReference type="SMR" id="A1R8W1"/>
<dbReference type="STRING" id="290340.AAur_2964"/>
<dbReference type="GeneID" id="97301809"/>
<dbReference type="KEGG" id="aau:AAur_2964"/>
<dbReference type="eggNOG" id="COG0081">
    <property type="taxonomic scope" value="Bacteria"/>
</dbReference>
<dbReference type="HOGENOM" id="CLU_062853_0_0_11"/>
<dbReference type="OrthoDB" id="9803740at2"/>
<dbReference type="Proteomes" id="UP000000637">
    <property type="component" value="Chromosome"/>
</dbReference>
<dbReference type="GO" id="GO:0015934">
    <property type="term" value="C:large ribosomal subunit"/>
    <property type="evidence" value="ECO:0007669"/>
    <property type="project" value="InterPro"/>
</dbReference>
<dbReference type="GO" id="GO:0019843">
    <property type="term" value="F:rRNA binding"/>
    <property type="evidence" value="ECO:0007669"/>
    <property type="project" value="UniProtKB-UniRule"/>
</dbReference>
<dbReference type="GO" id="GO:0003735">
    <property type="term" value="F:structural constituent of ribosome"/>
    <property type="evidence" value="ECO:0007669"/>
    <property type="project" value="InterPro"/>
</dbReference>
<dbReference type="GO" id="GO:0000049">
    <property type="term" value="F:tRNA binding"/>
    <property type="evidence" value="ECO:0007669"/>
    <property type="project" value="UniProtKB-KW"/>
</dbReference>
<dbReference type="GO" id="GO:0006417">
    <property type="term" value="P:regulation of translation"/>
    <property type="evidence" value="ECO:0007669"/>
    <property type="project" value="UniProtKB-KW"/>
</dbReference>
<dbReference type="GO" id="GO:0006412">
    <property type="term" value="P:translation"/>
    <property type="evidence" value="ECO:0007669"/>
    <property type="project" value="UniProtKB-UniRule"/>
</dbReference>
<dbReference type="CDD" id="cd00403">
    <property type="entry name" value="Ribosomal_L1"/>
    <property type="match status" value="1"/>
</dbReference>
<dbReference type="FunFam" id="3.40.50.790:FF:000001">
    <property type="entry name" value="50S ribosomal protein L1"/>
    <property type="match status" value="1"/>
</dbReference>
<dbReference type="Gene3D" id="3.30.190.20">
    <property type="match status" value="1"/>
</dbReference>
<dbReference type="Gene3D" id="3.40.50.790">
    <property type="match status" value="1"/>
</dbReference>
<dbReference type="HAMAP" id="MF_01318_B">
    <property type="entry name" value="Ribosomal_uL1_B"/>
    <property type="match status" value="1"/>
</dbReference>
<dbReference type="InterPro" id="IPR005878">
    <property type="entry name" value="Ribosom_uL1_bac-type"/>
</dbReference>
<dbReference type="InterPro" id="IPR002143">
    <property type="entry name" value="Ribosomal_uL1"/>
</dbReference>
<dbReference type="InterPro" id="IPR023674">
    <property type="entry name" value="Ribosomal_uL1-like"/>
</dbReference>
<dbReference type="InterPro" id="IPR028364">
    <property type="entry name" value="Ribosomal_uL1/biogenesis"/>
</dbReference>
<dbReference type="InterPro" id="IPR016095">
    <property type="entry name" value="Ribosomal_uL1_3-a/b-sand"/>
</dbReference>
<dbReference type="InterPro" id="IPR023673">
    <property type="entry name" value="Ribosomal_uL1_CS"/>
</dbReference>
<dbReference type="NCBIfam" id="TIGR01169">
    <property type="entry name" value="rplA_bact"/>
    <property type="match status" value="1"/>
</dbReference>
<dbReference type="PANTHER" id="PTHR36427">
    <property type="entry name" value="54S RIBOSOMAL PROTEIN L1, MITOCHONDRIAL"/>
    <property type="match status" value="1"/>
</dbReference>
<dbReference type="PANTHER" id="PTHR36427:SF3">
    <property type="entry name" value="LARGE RIBOSOMAL SUBUNIT PROTEIN UL1M"/>
    <property type="match status" value="1"/>
</dbReference>
<dbReference type="Pfam" id="PF00687">
    <property type="entry name" value="Ribosomal_L1"/>
    <property type="match status" value="1"/>
</dbReference>
<dbReference type="PIRSF" id="PIRSF002155">
    <property type="entry name" value="Ribosomal_L1"/>
    <property type="match status" value="1"/>
</dbReference>
<dbReference type="SUPFAM" id="SSF56808">
    <property type="entry name" value="Ribosomal protein L1"/>
    <property type="match status" value="1"/>
</dbReference>
<dbReference type="PROSITE" id="PS01199">
    <property type="entry name" value="RIBOSOMAL_L1"/>
    <property type="match status" value="1"/>
</dbReference>
<sequence length="235" mass="24889">MAKRSKAYEAAVAKIEADKVYAPIEAITLAKDTNPSKFDATVEVAFRLGVDPRKADQMVRGTVNLPHGTGKTARVLVFATGDKAEAAIAAGADFVGSDDLIEKIAAGWTDFDAAVATPDLMGKVGRLGKVLGPRNLMPNPKTGTVTPDVTKAVNDIKGGKIDFRVDKHSNLHFIIGKVSFDVNKLAENYAAALEEVLRLKPSASKGRYIQKATVATTFGPGITVDPNVTKVLVDA</sequence>
<comment type="function">
    <text evidence="1">Binds directly to 23S rRNA. The L1 stalk is quite mobile in the ribosome, and is involved in E site tRNA release.</text>
</comment>
<comment type="function">
    <text evidence="1">Protein L1 is also a translational repressor protein, it controls the translation of the L11 operon by binding to its mRNA.</text>
</comment>
<comment type="subunit">
    <text evidence="1">Part of the 50S ribosomal subunit.</text>
</comment>
<comment type="similarity">
    <text evidence="1">Belongs to the universal ribosomal protein uL1 family.</text>
</comment>
<evidence type="ECO:0000255" key="1">
    <source>
        <dbReference type="HAMAP-Rule" id="MF_01318"/>
    </source>
</evidence>
<evidence type="ECO:0000305" key="2"/>